<comment type="function">
    <text evidence="1">Binds to 23S rRNA. Forms part of two intersubunit bridges in the 70S ribosome.</text>
</comment>
<comment type="subunit">
    <text evidence="1">Part of the 50S ribosomal subunit. Forms a cluster with proteins L3 and L19. In the 70S ribosome, L14 and L19 interact and together make contacts with the 16S rRNA in bridges B5 and B8.</text>
</comment>
<comment type="similarity">
    <text evidence="1">Belongs to the universal ribosomal protein uL14 family.</text>
</comment>
<gene>
    <name evidence="1" type="primary">rplN</name>
    <name type="ordered locus">BL1590</name>
</gene>
<reference key="1">
    <citation type="journal article" date="2002" name="Proc. Natl. Acad. Sci. U.S.A.">
        <title>The genome sequence of Bifidobacterium longum reflects its adaptation to the human gastrointestinal tract.</title>
        <authorList>
            <person name="Schell M.A."/>
            <person name="Karmirantzou M."/>
            <person name="Snel B."/>
            <person name="Vilanova D."/>
            <person name="Berger B."/>
            <person name="Pessi G."/>
            <person name="Zwahlen M.-C."/>
            <person name="Desiere F."/>
            <person name="Bork P."/>
            <person name="Delley M."/>
            <person name="Pridmore R.D."/>
            <person name="Arigoni F."/>
        </authorList>
    </citation>
    <scope>NUCLEOTIDE SEQUENCE [LARGE SCALE GENOMIC DNA]</scope>
    <source>
        <strain>NCC 2705</strain>
    </source>
</reference>
<feature type="chain" id="PRO_1000055522" description="Large ribosomal subunit protein uL14">
    <location>
        <begin position="1"/>
        <end position="122"/>
    </location>
</feature>
<name>RL14_BIFLO</name>
<accession>Q8G408</accession>
<protein>
    <recommendedName>
        <fullName evidence="1">Large ribosomal subunit protein uL14</fullName>
    </recommendedName>
    <alternativeName>
        <fullName evidence="2">50S ribosomal protein L14</fullName>
    </alternativeName>
</protein>
<organism>
    <name type="scientific">Bifidobacterium longum (strain NCC 2705)</name>
    <dbReference type="NCBI Taxonomy" id="206672"/>
    <lineage>
        <taxon>Bacteria</taxon>
        <taxon>Bacillati</taxon>
        <taxon>Actinomycetota</taxon>
        <taxon>Actinomycetes</taxon>
        <taxon>Bifidobacteriales</taxon>
        <taxon>Bifidobacteriaceae</taxon>
        <taxon>Bifidobacterium</taxon>
    </lineage>
</organism>
<evidence type="ECO:0000255" key="1">
    <source>
        <dbReference type="HAMAP-Rule" id="MF_01367"/>
    </source>
</evidence>
<evidence type="ECO:0000305" key="2"/>
<dbReference type="EMBL" id="AE014295">
    <property type="protein sequence ID" value="AAN25379.1"/>
    <property type="molecule type" value="Genomic_DNA"/>
</dbReference>
<dbReference type="RefSeq" id="NP_696743.1">
    <property type="nucleotide sequence ID" value="NC_004307.2"/>
</dbReference>
<dbReference type="RefSeq" id="WP_003829893.1">
    <property type="nucleotide sequence ID" value="NC_004307.2"/>
</dbReference>
<dbReference type="SMR" id="Q8G408"/>
<dbReference type="STRING" id="206672.BL1590"/>
<dbReference type="EnsemblBacteria" id="AAN25379">
    <property type="protein sequence ID" value="AAN25379"/>
    <property type="gene ID" value="BL1590"/>
</dbReference>
<dbReference type="GeneID" id="69578887"/>
<dbReference type="KEGG" id="blo:BL1590"/>
<dbReference type="PATRIC" id="fig|206672.9.peg.1645"/>
<dbReference type="HOGENOM" id="CLU_095071_2_1_11"/>
<dbReference type="OrthoDB" id="9806379at2"/>
<dbReference type="PhylomeDB" id="Q8G408"/>
<dbReference type="PRO" id="PR:Q8G408"/>
<dbReference type="Proteomes" id="UP000000439">
    <property type="component" value="Chromosome"/>
</dbReference>
<dbReference type="GO" id="GO:0022625">
    <property type="term" value="C:cytosolic large ribosomal subunit"/>
    <property type="evidence" value="ECO:0007669"/>
    <property type="project" value="TreeGrafter"/>
</dbReference>
<dbReference type="GO" id="GO:0070180">
    <property type="term" value="F:large ribosomal subunit rRNA binding"/>
    <property type="evidence" value="ECO:0007669"/>
    <property type="project" value="TreeGrafter"/>
</dbReference>
<dbReference type="GO" id="GO:0003735">
    <property type="term" value="F:structural constituent of ribosome"/>
    <property type="evidence" value="ECO:0007669"/>
    <property type="project" value="InterPro"/>
</dbReference>
<dbReference type="GO" id="GO:0006412">
    <property type="term" value="P:translation"/>
    <property type="evidence" value="ECO:0007669"/>
    <property type="project" value="UniProtKB-UniRule"/>
</dbReference>
<dbReference type="CDD" id="cd00337">
    <property type="entry name" value="Ribosomal_uL14"/>
    <property type="match status" value="1"/>
</dbReference>
<dbReference type="FunFam" id="2.40.150.20:FF:000001">
    <property type="entry name" value="50S ribosomal protein L14"/>
    <property type="match status" value="1"/>
</dbReference>
<dbReference type="Gene3D" id="2.40.150.20">
    <property type="entry name" value="Ribosomal protein L14"/>
    <property type="match status" value="1"/>
</dbReference>
<dbReference type="HAMAP" id="MF_01367">
    <property type="entry name" value="Ribosomal_uL14"/>
    <property type="match status" value="1"/>
</dbReference>
<dbReference type="InterPro" id="IPR000218">
    <property type="entry name" value="Ribosomal_uL14"/>
</dbReference>
<dbReference type="InterPro" id="IPR005745">
    <property type="entry name" value="Ribosomal_uL14_bac-type"/>
</dbReference>
<dbReference type="InterPro" id="IPR019972">
    <property type="entry name" value="Ribosomal_uL14_CS"/>
</dbReference>
<dbReference type="InterPro" id="IPR036853">
    <property type="entry name" value="Ribosomal_uL14_sf"/>
</dbReference>
<dbReference type="NCBIfam" id="TIGR01067">
    <property type="entry name" value="rplN_bact"/>
    <property type="match status" value="1"/>
</dbReference>
<dbReference type="PANTHER" id="PTHR11761">
    <property type="entry name" value="50S/60S RIBOSOMAL PROTEIN L14/L23"/>
    <property type="match status" value="1"/>
</dbReference>
<dbReference type="PANTHER" id="PTHR11761:SF3">
    <property type="entry name" value="LARGE RIBOSOMAL SUBUNIT PROTEIN UL14M"/>
    <property type="match status" value="1"/>
</dbReference>
<dbReference type="Pfam" id="PF00238">
    <property type="entry name" value="Ribosomal_L14"/>
    <property type="match status" value="1"/>
</dbReference>
<dbReference type="SMART" id="SM01374">
    <property type="entry name" value="Ribosomal_L14"/>
    <property type="match status" value="1"/>
</dbReference>
<dbReference type="SUPFAM" id="SSF50193">
    <property type="entry name" value="Ribosomal protein L14"/>
    <property type="match status" value="1"/>
</dbReference>
<dbReference type="PROSITE" id="PS00049">
    <property type="entry name" value="RIBOSOMAL_L14"/>
    <property type="match status" value="1"/>
</dbReference>
<sequence>MIQQETRLHVADNTGAKELLAIRVLGGSKRRYAGIGDVIVASVKDAIPGGSVKKGDVVKAVVVRTVKESRRADGSYIKFDENAAVILGSGREPKGTRIFGPVGRELREHKFMKIVSLAPEVI</sequence>
<keyword id="KW-1185">Reference proteome</keyword>
<keyword id="KW-0687">Ribonucleoprotein</keyword>
<keyword id="KW-0689">Ribosomal protein</keyword>
<keyword id="KW-0694">RNA-binding</keyword>
<keyword id="KW-0699">rRNA-binding</keyword>
<proteinExistence type="inferred from homology"/>